<reference key="1">
    <citation type="journal article" date="1998" name="J. Biol. Chem.">
        <title>Assembly of iron-sulfur clusters. Identification of an iscSUA-hscBA-fdx gene cluster from Azotobacter vinelandii.</title>
        <authorList>
            <person name="Zheng L."/>
            <person name="Cash V.L."/>
            <person name="Flint D.H."/>
            <person name="Dean D.R."/>
        </authorList>
    </citation>
    <scope>NUCLEOTIDE SEQUENCE [GENOMIC DNA]</scope>
    <source>
        <strain>ATCC 13705 / OP1 / DSM 366 / NCIMB 11614 / LMG 3878 / UW</strain>
    </source>
</reference>
<feature type="chain" id="PRO_0000070956" description="Co-chaperone protein HscB homolog">
    <location>
        <begin position="1"/>
        <end position="171"/>
    </location>
</feature>
<feature type="domain" description="J" evidence="1">
    <location>
        <begin position="3"/>
        <end position="75"/>
    </location>
</feature>
<accession>O69220</accession>
<protein>
    <recommendedName>
        <fullName evidence="1">Co-chaperone protein HscB homolog</fullName>
    </recommendedName>
</protein>
<proteinExistence type="inferred from homology"/>
<name>HSCB_AZOVI</name>
<dbReference type="EMBL" id="AF010139">
    <property type="protein sequence ID" value="AAC24479.1"/>
    <property type="molecule type" value="Genomic_DNA"/>
</dbReference>
<dbReference type="PIR" id="T44284">
    <property type="entry name" value="T44284"/>
</dbReference>
<dbReference type="SMR" id="O69220"/>
<dbReference type="GO" id="GO:1990230">
    <property type="term" value="C:iron-sulfur cluster transfer complex"/>
    <property type="evidence" value="ECO:0007669"/>
    <property type="project" value="TreeGrafter"/>
</dbReference>
<dbReference type="GO" id="GO:0001671">
    <property type="term" value="F:ATPase activator activity"/>
    <property type="evidence" value="ECO:0007669"/>
    <property type="project" value="InterPro"/>
</dbReference>
<dbReference type="GO" id="GO:0051087">
    <property type="term" value="F:protein-folding chaperone binding"/>
    <property type="evidence" value="ECO:0007669"/>
    <property type="project" value="InterPro"/>
</dbReference>
<dbReference type="GO" id="GO:0044571">
    <property type="term" value="P:[2Fe-2S] cluster assembly"/>
    <property type="evidence" value="ECO:0007669"/>
    <property type="project" value="InterPro"/>
</dbReference>
<dbReference type="GO" id="GO:0051259">
    <property type="term" value="P:protein complex oligomerization"/>
    <property type="evidence" value="ECO:0007669"/>
    <property type="project" value="InterPro"/>
</dbReference>
<dbReference type="GO" id="GO:0006457">
    <property type="term" value="P:protein folding"/>
    <property type="evidence" value="ECO:0007669"/>
    <property type="project" value="UniProtKB-UniRule"/>
</dbReference>
<dbReference type="CDD" id="cd06257">
    <property type="entry name" value="DnaJ"/>
    <property type="match status" value="1"/>
</dbReference>
<dbReference type="Gene3D" id="1.10.287.110">
    <property type="entry name" value="DnaJ domain"/>
    <property type="match status" value="1"/>
</dbReference>
<dbReference type="Gene3D" id="1.20.1280.20">
    <property type="entry name" value="HscB, C-terminal domain"/>
    <property type="match status" value="1"/>
</dbReference>
<dbReference type="HAMAP" id="MF_00682">
    <property type="entry name" value="HscB"/>
    <property type="match status" value="1"/>
</dbReference>
<dbReference type="InterPro" id="IPR001623">
    <property type="entry name" value="DnaJ_domain"/>
</dbReference>
<dbReference type="InterPro" id="IPR004640">
    <property type="entry name" value="HscB"/>
</dbReference>
<dbReference type="InterPro" id="IPR036386">
    <property type="entry name" value="HscB_C_sf"/>
</dbReference>
<dbReference type="InterPro" id="IPR009073">
    <property type="entry name" value="HscB_oligo_C"/>
</dbReference>
<dbReference type="InterPro" id="IPR036869">
    <property type="entry name" value="J_dom_sf"/>
</dbReference>
<dbReference type="NCBIfam" id="TIGR00714">
    <property type="entry name" value="hscB"/>
    <property type="match status" value="1"/>
</dbReference>
<dbReference type="NCBIfam" id="NF001420">
    <property type="entry name" value="PRK00294.1"/>
    <property type="match status" value="1"/>
</dbReference>
<dbReference type="PANTHER" id="PTHR14021">
    <property type="entry name" value="IRON-SULFUR CLUSTER CO-CHAPERONE PROTEIN HSCB"/>
    <property type="match status" value="1"/>
</dbReference>
<dbReference type="PANTHER" id="PTHR14021:SF15">
    <property type="entry name" value="IRON-SULFUR CLUSTER CO-CHAPERONE PROTEIN HSCB"/>
    <property type="match status" value="1"/>
</dbReference>
<dbReference type="Pfam" id="PF00226">
    <property type="entry name" value="DnaJ"/>
    <property type="match status" value="1"/>
</dbReference>
<dbReference type="Pfam" id="PF07743">
    <property type="entry name" value="HSCB_C"/>
    <property type="match status" value="1"/>
</dbReference>
<dbReference type="SMART" id="SM00271">
    <property type="entry name" value="DnaJ"/>
    <property type="match status" value="1"/>
</dbReference>
<dbReference type="SUPFAM" id="SSF46565">
    <property type="entry name" value="Chaperone J-domain"/>
    <property type="match status" value="1"/>
</dbReference>
<dbReference type="SUPFAM" id="SSF47144">
    <property type="entry name" value="HSC20 (HSCB), C-terminal oligomerisation domain"/>
    <property type="match status" value="1"/>
</dbReference>
<dbReference type="PROSITE" id="PS50076">
    <property type="entry name" value="DNAJ_2"/>
    <property type="match status" value="1"/>
</dbReference>
<sequence>MTSHFALFDLEPDFRLDQDRLAVRYRELVRRVHPDRFAGAPEREQRLALEEAARLNEAYQTLKSPSQRARYLLSLQGEELSQETTVQDPAFLMQQMELREELQELQDSADLAGVARFKRRLVQDQEQLNEGFAACWADPRRRDEAERLARRMQFLDKLFAEVRQLEERLDD</sequence>
<comment type="function">
    <text evidence="1">Co-chaperone involved in the maturation of iron-sulfur cluster-containing proteins. Seems to help targeting proteins to be folded toward HscA.</text>
</comment>
<comment type="subunit">
    <text evidence="1">Interacts with HscA and stimulates its ATPase activity.</text>
</comment>
<comment type="similarity">
    <text evidence="1">Belongs to the HscB family.</text>
</comment>
<organism>
    <name type="scientific">Azotobacter vinelandii</name>
    <dbReference type="NCBI Taxonomy" id="354"/>
    <lineage>
        <taxon>Bacteria</taxon>
        <taxon>Pseudomonadati</taxon>
        <taxon>Pseudomonadota</taxon>
        <taxon>Gammaproteobacteria</taxon>
        <taxon>Pseudomonadales</taxon>
        <taxon>Pseudomonadaceae</taxon>
        <taxon>Azotobacter</taxon>
    </lineage>
</organism>
<gene>
    <name evidence="1" type="primary">hscB</name>
</gene>
<evidence type="ECO:0000255" key="1">
    <source>
        <dbReference type="HAMAP-Rule" id="MF_00682"/>
    </source>
</evidence>
<keyword id="KW-0143">Chaperone</keyword>